<keyword id="KW-0001">2Fe-2S</keyword>
<keyword id="KW-0150">Chloroplast</keyword>
<keyword id="KW-0408">Iron</keyword>
<keyword id="KW-0411">Iron-sulfur</keyword>
<keyword id="KW-0479">Metal-binding</keyword>
<keyword id="KW-0934">Plastid</keyword>
<keyword id="KW-0676">Redox-active center</keyword>
<protein>
    <recommendedName>
        <fullName>Uncharacterized monothiol glutaredoxin ycf64</fullName>
    </recommendedName>
    <alternativeName>
        <fullName>ORF107</fullName>
    </alternativeName>
</protein>
<gene>
    <name type="primary">ycf64</name>
</gene>
<accession>P51384</accession>
<feature type="chain" id="PRO_0000102262" description="Uncharacterized monothiol glutaredoxin ycf64">
    <location>
        <begin position="1"/>
        <end position="107"/>
    </location>
</feature>
<feature type="domain" description="Glutaredoxin" evidence="2">
    <location>
        <begin position="6"/>
        <end position="107"/>
    </location>
</feature>
<feature type="binding site" evidence="1">
    <location>
        <position position="23"/>
    </location>
    <ligand>
        <name>glutathione</name>
        <dbReference type="ChEBI" id="CHEBI:57925"/>
    </ligand>
</feature>
<feature type="binding site" evidence="1">
    <location>
        <position position="31"/>
    </location>
    <ligand>
        <name>[2Fe-2S] cluster</name>
        <dbReference type="ChEBI" id="CHEBI:190135"/>
        <note>ligand shared between dimeric partners</note>
    </ligand>
</feature>
<feature type="binding site" evidence="1">
    <location>
        <position position="60"/>
    </location>
    <ligand>
        <name>glutathione</name>
        <dbReference type="ChEBI" id="CHEBI:57925"/>
    </ligand>
</feature>
<feature type="binding site" evidence="1">
    <location>
        <begin position="85"/>
        <end position="86"/>
    </location>
    <ligand>
        <name>glutathione</name>
        <dbReference type="ChEBI" id="CHEBI:57925"/>
    </ligand>
</feature>
<name>YCF64_PORPU</name>
<sequence length="107" mass="12255">MDIETKKVIEQILDNNKIVLFMKGSKLMPMCGFSNTAIQILNTLNTDYFTYDILENENIRQAIKEHSSWPTIPQLYINREFVGGADIMLELFEQGELQAQVETLLAA</sequence>
<proteinExistence type="inferred from homology"/>
<comment type="subcellular location">
    <subcellularLocation>
        <location>Plastid</location>
        <location>Chloroplast</location>
    </subcellularLocation>
</comment>
<comment type="similarity">
    <text evidence="3">Belongs to the glutaredoxin family. Monothiol subfamily.</text>
</comment>
<reference key="1">
    <citation type="journal article" date="1995" name="Plant Mol. Biol. Rep.">
        <title>Complete nucleotide sequence of the Porphyra purpurea chloroplast genome.</title>
        <authorList>
            <person name="Reith M.E."/>
            <person name="Munholland J."/>
        </authorList>
    </citation>
    <scope>NUCLEOTIDE SEQUENCE [LARGE SCALE GENOMIC DNA]</scope>
    <source>
        <strain>Avonport</strain>
    </source>
</reference>
<dbReference type="EMBL" id="U38804">
    <property type="protein sequence ID" value="AAC08270.1"/>
    <property type="molecule type" value="Genomic_DNA"/>
</dbReference>
<dbReference type="PIR" id="S73305">
    <property type="entry name" value="S73305"/>
</dbReference>
<dbReference type="SMR" id="P51384"/>
<dbReference type="GO" id="GO:0009507">
    <property type="term" value="C:chloroplast"/>
    <property type="evidence" value="ECO:0007669"/>
    <property type="project" value="UniProtKB-SubCell"/>
</dbReference>
<dbReference type="GO" id="GO:0005739">
    <property type="term" value="C:mitochondrion"/>
    <property type="evidence" value="ECO:0007669"/>
    <property type="project" value="UniProtKB-ARBA"/>
</dbReference>
<dbReference type="GO" id="GO:0051537">
    <property type="term" value="F:2 iron, 2 sulfur cluster binding"/>
    <property type="evidence" value="ECO:0007669"/>
    <property type="project" value="UniProtKB-KW"/>
</dbReference>
<dbReference type="GO" id="GO:0015036">
    <property type="term" value="F:disulfide oxidoreductase activity"/>
    <property type="evidence" value="ECO:0007669"/>
    <property type="project" value="InterPro"/>
</dbReference>
<dbReference type="GO" id="GO:0046872">
    <property type="term" value="F:metal ion binding"/>
    <property type="evidence" value="ECO:0007669"/>
    <property type="project" value="UniProtKB-KW"/>
</dbReference>
<dbReference type="CDD" id="cd03028">
    <property type="entry name" value="GRX_PICOT_like"/>
    <property type="match status" value="1"/>
</dbReference>
<dbReference type="FunFam" id="3.40.30.10:FF:000005">
    <property type="entry name" value="Glutaredoxin 5"/>
    <property type="match status" value="1"/>
</dbReference>
<dbReference type="Gene3D" id="3.40.30.10">
    <property type="entry name" value="Glutaredoxin"/>
    <property type="match status" value="1"/>
</dbReference>
<dbReference type="InterPro" id="IPR002109">
    <property type="entry name" value="Glutaredoxin"/>
</dbReference>
<dbReference type="InterPro" id="IPR033658">
    <property type="entry name" value="GRX_PICOT-like"/>
</dbReference>
<dbReference type="InterPro" id="IPR014434">
    <property type="entry name" value="Monothiol_GRX"/>
</dbReference>
<dbReference type="InterPro" id="IPR004480">
    <property type="entry name" value="Monothiol_GRX-rel"/>
</dbReference>
<dbReference type="InterPro" id="IPR036249">
    <property type="entry name" value="Thioredoxin-like_sf"/>
</dbReference>
<dbReference type="NCBIfam" id="TIGR00365">
    <property type="entry name" value="Grx4 family monothiol glutaredoxin"/>
    <property type="match status" value="1"/>
</dbReference>
<dbReference type="PANTHER" id="PTHR10293">
    <property type="entry name" value="GLUTAREDOXIN FAMILY MEMBER"/>
    <property type="match status" value="1"/>
</dbReference>
<dbReference type="PANTHER" id="PTHR10293:SF16">
    <property type="entry name" value="GLUTAREDOXIN-RELATED PROTEIN 5, MITOCHONDRIAL"/>
    <property type="match status" value="1"/>
</dbReference>
<dbReference type="Pfam" id="PF00462">
    <property type="entry name" value="Glutaredoxin"/>
    <property type="match status" value="1"/>
</dbReference>
<dbReference type="PIRSF" id="PIRSF005894">
    <property type="entry name" value="Monothiol_GRX"/>
    <property type="match status" value="1"/>
</dbReference>
<dbReference type="SUPFAM" id="SSF52833">
    <property type="entry name" value="Thioredoxin-like"/>
    <property type="match status" value="1"/>
</dbReference>
<dbReference type="PROSITE" id="PS51354">
    <property type="entry name" value="GLUTAREDOXIN_2"/>
    <property type="match status" value="1"/>
</dbReference>
<evidence type="ECO:0000255" key="1"/>
<evidence type="ECO:0000255" key="2">
    <source>
        <dbReference type="PROSITE-ProRule" id="PRU00686"/>
    </source>
</evidence>
<evidence type="ECO:0000305" key="3"/>
<organism>
    <name type="scientific">Porphyra purpurea</name>
    <name type="common">Red seaweed</name>
    <name type="synonym">Ulva purpurea</name>
    <dbReference type="NCBI Taxonomy" id="2787"/>
    <lineage>
        <taxon>Eukaryota</taxon>
        <taxon>Rhodophyta</taxon>
        <taxon>Bangiophyceae</taxon>
        <taxon>Bangiales</taxon>
        <taxon>Bangiaceae</taxon>
        <taxon>Porphyra</taxon>
    </lineage>
</organism>
<geneLocation type="chloroplast"/>